<protein>
    <recommendedName>
        <fullName evidence="1">3-phenylpropionate-dihydrodiol/cinnamic acid-dihydrodiol dehydrogenase</fullName>
        <ecNumber evidence="1">1.3.1.87</ecNumber>
    </recommendedName>
    <alternativeName>
        <fullName evidence="1">2,3-dihydroxy-2,3-dihydrophenylpropionate dehydrogenase</fullName>
    </alternativeName>
    <alternativeName>
        <fullName evidence="1">3-(cis-5,6-dihydroxycyclohexa-1,3-dien-1-yl)propanoate dehydrogenase</fullName>
    </alternativeName>
    <alternativeName>
        <fullName evidence="1">CI-dihydrodiol dehydrogenase</fullName>
    </alternativeName>
    <alternativeName>
        <fullName evidence="1">Cis-3-(2-carboxyethenyl)-3,5-cyclohexadiene-1,2-diol dehydrogenase</fullName>
    </alternativeName>
    <alternativeName>
        <fullName evidence="1">Cis-3-(2-carboxyethyl)-3,5-cyclohexadiene-1,2-diol dehydrogenase</fullName>
    </alternativeName>
    <alternativeName>
        <fullName evidence="1">PP-dihydrodiol dehydrogenase</fullName>
    </alternativeName>
</protein>
<sequence length="270" mass="28470">MSDLHNESIFITGGGSGLGLALVERFIEEGAQVATLELSAAKVASLRQRFGEHILAVEGNVTCYADYQRAVDQILTRSGKLDCFIGNAGIWDHNASLVNTPAETLETGFHELFNVNVLGYLLGAKACAPALIASEGSMIFTLSNAAWYPGGGGPLYTASKHAATGLIRQLAYELAPKVRVNGVGPCGMASDLRGPQALGQSETSIMQSLTPEKIAAILPLQFFPQPADFTGPYVMLASRRNNRALSGVMINADAGLAIRGIRHVAAGLDL</sequence>
<name>HCAB_ECO24</name>
<reference key="1">
    <citation type="journal article" date="2008" name="J. Bacteriol.">
        <title>The pangenome structure of Escherichia coli: comparative genomic analysis of E. coli commensal and pathogenic isolates.</title>
        <authorList>
            <person name="Rasko D.A."/>
            <person name="Rosovitz M.J."/>
            <person name="Myers G.S.A."/>
            <person name="Mongodin E.F."/>
            <person name="Fricke W.F."/>
            <person name="Gajer P."/>
            <person name="Crabtree J."/>
            <person name="Sebaihia M."/>
            <person name="Thomson N.R."/>
            <person name="Chaudhuri R."/>
            <person name="Henderson I.R."/>
            <person name="Sperandio V."/>
            <person name="Ravel J."/>
        </authorList>
    </citation>
    <scope>NUCLEOTIDE SEQUENCE [LARGE SCALE GENOMIC DNA]</scope>
    <source>
        <strain>E24377A / ETEC</strain>
    </source>
</reference>
<proteinExistence type="inferred from homology"/>
<organism>
    <name type="scientific">Escherichia coli O139:H28 (strain E24377A / ETEC)</name>
    <dbReference type="NCBI Taxonomy" id="331111"/>
    <lineage>
        <taxon>Bacteria</taxon>
        <taxon>Pseudomonadati</taxon>
        <taxon>Pseudomonadota</taxon>
        <taxon>Gammaproteobacteria</taxon>
        <taxon>Enterobacterales</taxon>
        <taxon>Enterobacteriaceae</taxon>
        <taxon>Escherichia</taxon>
    </lineage>
</organism>
<gene>
    <name evidence="1" type="primary">hcaB</name>
    <name type="ordered locus">EcE24377A_2826</name>
</gene>
<comment type="function">
    <text evidence="1">Converts 3-phenylpropionate-dihydrodiol (PP-dihydrodiol) and cinnamic acid-dihydrodiol (CI-dihydrodiol) into 3-(2,3-dihydroxylphenyl)propanoic acid (DHPP) and 2,3-dihydroxicinnamic acid (DHCI), respectively.</text>
</comment>
<comment type="catalytic activity">
    <reaction evidence="1">
        <text>3-(cis-5,6-dihydroxycyclohexa-1,3-dien-1-yl)propanoate + NAD(+) = 3-(2,3-dihydroxyphenyl)propanoate + NADH + H(+)</text>
        <dbReference type="Rhea" id="RHEA:25062"/>
        <dbReference type="ChEBI" id="CHEBI:15378"/>
        <dbReference type="ChEBI" id="CHEBI:46951"/>
        <dbReference type="ChEBI" id="CHEBI:57540"/>
        <dbReference type="ChEBI" id="CHEBI:57945"/>
        <dbReference type="ChEBI" id="CHEBI:60087"/>
        <dbReference type="EC" id="1.3.1.87"/>
    </reaction>
</comment>
<comment type="catalytic activity">
    <reaction evidence="1">
        <text>(2E)-3-(cis-5,6-dihydroxycyclohexa-1,3-dien-1-yl)prop-2-enoate + NAD(+) = (2E)-3-(2,3-dihydroxyphenyl)prop-2-enoate + NADH + H(+)</text>
        <dbReference type="Rhea" id="RHEA:25066"/>
        <dbReference type="ChEBI" id="CHEBI:15378"/>
        <dbReference type="ChEBI" id="CHEBI:57540"/>
        <dbReference type="ChEBI" id="CHEBI:57945"/>
        <dbReference type="ChEBI" id="CHEBI:58642"/>
        <dbReference type="ChEBI" id="CHEBI:61451"/>
        <dbReference type="EC" id="1.3.1.87"/>
    </reaction>
</comment>
<comment type="pathway">
    <text evidence="1">Aromatic compound metabolism; 3-phenylpropanoate degradation.</text>
</comment>
<comment type="similarity">
    <text evidence="1">Belongs to the short-chain dehydrogenases/reductases (SDR) family.</text>
</comment>
<feature type="chain" id="PRO_0000333760" description="3-phenylpropionate-dihydrodiol/cinnamic acid-dihydrodiol dehydrogenase">
    <location>
        <begin position="1"/>
        <end position="270"/>
    </location>
</feature>
<feature type="active site" description="Proton acceptor" evidence="1">
    <location>
        <position position="156"/>
    </location>
</feature>
<feature type="binding site" evidence="1">
    <location>
        <begin position="10"/>
        <end position="34"/>
    </location>
    <ligand>
        <name>NAD(+)</name>
        <dbReference type="ChEBI" id="CHEBI:57540"/>
    </ligand>
</feature>
<feature type="binding site" evidence="1">
    <location>
        <position position="143"/>
    </location>
    <ligand>
        <name>substrate</name>
    </ligand>
</feature>
<keyword id="KW-0058">Aromatic hydrocarbons catabolism</keyword>
<keyword id="KW-0520">NAD</keyword>
<keyword id="KW-0560">Oxidoreductase</keyword>
<keyword id="KW-1185">Reference proteome</keyword>
<evidence type="ECO:0000255" key="1">
    <source>
        <dbReference type="HAMAP-Rule" id="MF_01647"/>
    </source>
</evidence>
<dbReference type="EC" id="1.3.1.87" evidence="1"/>
<dbReference type="EMBL" id="CP000800">
    <property type="protein sequence ID" value="ABV19925.1"/>
    <property type="molecule type" value="Genomic_DNA"/>
</dbReference>
<dbReference type="RefSeq" id="WP_001281377.1">
    <property type="nucleotide sequence ID" value="NC_009801.1"/>
</dbReference>
<dbReference type="SMR" id="A7ZPY4"/>
<dbReference type="GeneID" id="75206234"/>
<dbReference type="KEGG" id="ecw:EcE24377A_2826"/>
<dbReference type="HOGENOM" id="CLU_010194_1_0_6"/>
<dbReference type="UniPathway" id="UPA00714"/>
<dbReference type="Proteomes" id="UP000001122">
    <property type="component" value="Chromosome"/>
</dbReference>
<dbReference type="GO" id="GO:0018498">
    <property type="term" value="F:2,3-dihydroxy-2,3-dihydro-phenylpropionate dehydrogenase activity"/>
    <property type="evidence" value="ECO:0007669"/>
    <property type="project" value="UniProtKB-UniRule"/>
</dbReference>
<dbReference type="GO" id="GO:0019380">
    <property type="term" value="P:3-phenylpropionate catabolic process"/>
    <property type="evidence" value="ECO:0007669"/>
    <property type="project" value="UniProtKB-UniRule"/>
</dbReference>
<dbReference type="CDD" id="cd05348">
    <property type="entry name" value="BphB-like_SDR_c"/>
    <property type="match status" value="1"/>
</dbReference>
<dbReference type="FunFam" id="3.40.50.720:FF:000151">
    <property type="entry name" value="3-phenylpropionate-dihydrodiol/cinnamic acid-dihydrodiol dehydrogenase"/>
    <property type="match status" value="1"/>
</dbReference>
<dbReference type="Gene3D" id="3.40.50.720">
    <property type="entry name" value="NAD(P)-binding Rossmann-like Domain"/>
    <property type="match status" value="1"/>
</dbReference>
<dbReference type="HAMAP" id="MF_01647">
    <property type="entry name" value="HcaB"/>
    <property type="match status" value="1"/>
</dbReference>
<dbReference type="InterPro" id="IPR047950">
    <property type="entry name" value="BphB-like_SDR"/>
</dbReference>
<dbReference type="InterPro" id="IPR023643">
    <property type="entry name" value="Dihydrodiol_DH_HcaB"/>
</dbReference>
<dbReference type="InterPro" id="IPR036291">
    <property type="entry name" value="NAD(P)-bd_dom_sf"/>
</dbReference>
<dbReference type="InterPro" id="IPR020904">
    <property type="entry name" value="Sc_DH/Rdtase_CS"/>
</dbReference>
<dbReference type="InterPro" id="IPR002347">
    <property type="entry name" value="SDR_fam"/>
</dbReference>
<dbReference type="NCBIfam" id="NF042950">
    <property type="entry name" value="3PPDhyd_Dh_HcaB"/>
    <property type="match status" value="1"/>
</dbReference>
<dbReference type="NCBIfam" id="NF004849">
    <property type="entry name" value="PRK06200.1"/>
    <property type="match status" value="1"/>
</dbReference>
<dbReference type="PANTHER" id="PTHR43943:SF17">
    <property type="entry name" value="3-PHENYLPROPIONATE-DIHYDRODIOL_CINNAMIC ACID-DIHYDRODIOL DEHYDROGENASE"/>
    <property type="match status" value="1"/>
</dbReference>
<dbReference type="PANTHER" id="PTHR43943">
    <property type="entry name" value="DEHYDROGENASE/REDUCTASE (SDR FAMILY) MEMBER 4"/>
    <property type="match status" value="1"/>
</dbReference>
<dbReference type="Pfam" id="PF00106">
    <property type="entry name" value="adh_short"/>
    <property type="match status" value="1"/>
</dbReference>
<dbReference type="PRINTS" id="PR00081">
    <property type="entry name" value="GDHRDH"/>
</dbReference>
<dbReference type="PRINTS" id="PR00080">
    <property type="entry name" value="SDRFAMILY"/>
</dbReference>
<dbReference type="SUPFAM" id="SSF51735">
    <property type="entry name" value="NAD(P)-binding Rossmann-fold domains"/>
    <property type="match status" value="1"/>
</dbReference>
<dbReference type="PROSITE" id="PS00061">
    <property type="entry name" value="ADH_SHORT"/>
    <property type="match status" value="1"/>
</dbReference>
<accession>A7ZPY4</accession>